<proteinExistence type="inferred from homology"/>
<gene>
    <name evidence="1" type="primary">mnmA</name>
    <name type="synonym">trmU</name>
    <name type="ordered locus">Veis_0297</name>
</gene>
<keyword id="KW-0067">ATP-binding</keyword>
<keyword id="KW-0963">Cytoplasm</keyword>
<keyword id="KW-1015">Disulfide bond</keyword>
<keyword id="KW-0547">Nucleotide-binding</keyword>
<keyword id="KW-1185">Reference proteome</keyword>
<keyword id="KW-0694">RNA-binding</keyword>
<keyword id="KW-0808">Transferase</keyword>
<keyword id="KW-0819">tRNA processing</keyword>
<keyword id="KW-0820">tRNA-binding</keyword>
<comment type="function">
    <text evidence="1">Catalyzes the 2-thiolation of uridine at the wobble position (U34) of tRNA, leading to the formation of s(2)U34.</text>
</comment>
<comment type="catalytic activity">
    <reaction evidence="1">
        <text>S-sulfanyl-L-cysteinyl-[protein] + uridine(34) in tRNA + AH2 + ATP = 2-thiouridine(34) in tRNA + L-cysteinyl-[protein] + A + AMP + diphosphate + H(+)</text>
        <dbReference type="Rhea" id="RHEA:47032"/>
        <dbReference type="Rhea" id="RHEA-COMP:10131"/>
        <dbReference type="Rhea" id="RHEA-COMP:11726"/>
        <dbReference type="Rhea" id="RHEA-COMP:11727"/>
        <dbReference type="Rhea" id="RHEA-COMP:11728"/>
        <dbReference type="ChEBI" id="CHEBI:13193"/>
        <dbReference type="ChEBI" id="CHEBI:15378"/>
        <dbReference type="ChEBI" id="CHEBI:17499"/>
        <dbReference type="ChEBI" id="CHEBI:29950"/>
        <dbReference type="ChEBI" id="CHEBI:30616"/>
        <dbReference type="ChEBI" id="CHEBI:33019"/>
        <dbReference type="ChEBI" id="CHEBI:61963"/>
        <dbReference type="ChEBI" id="CHEBI:65315"/>
        <dbReference type="ChEBI" id="CHEBI:87170"/>
        <dbReference type="ChEBI" id="CHEBI:456215"/>
        <dbReference type="EC" id="2.8.1.13"/>
    </reaction>
</comment>
<comment type="subcellular location">
    <subcellularLocation>
        <location evidence="1">Cytoplasm</location>
    </subcellularLocation>
</comment>
<comment type="similarity">
    <text evidence="1">Belongs to the MnmA/TRMU family.</text>
</comment>
<organism>
    <name type="scientific">Verminephrobacter eiseniae (strain EF01-2)</name>
    <dbReference type="NCBI Taxonomy" id="391735"/>
    <lineage>
        <taxon>Bacteria</taxon>
        <taxon>Pseudomonadati</taxon>
        <taxon>Pseudomonadota</taxon>
        <taxon>Betaproteobacteria</taxon>
        <taxon>Burkholderiales</taxon>
        <taxon>Comamonadaceae</taxon>
        <taxon>Verminephrobacter</taxon>
    </lineage>
</organism>
<accession>A1WEN1</accession>
<sequence length="370" mass="40338">MTASPKQRVVVGLSGGVDSAVTAYLLRQQGHEVVGIFMKNWEDDDDGGYCPSGTDFVDAAAVADVIGIEIEHVNFAADYKERVFAEFLREYQAGRTPNPDVLCNAEIKFKAFLDHALRLGAEKIATGHYAGVRRNPASGRFELLKGADPAKDQSYFLHRLDQRQLSRTLFPLGALRKTEVRRLAEDIGLPNARKKDSTGICFIGERPFREFLNRYIGPAPGPIEDDRGRVLGQHSGLSFYTLGQRQGLGIGGLKEQGAQRGGGAHAPWFVARKELATNTLRVVQGHDHPWLLSRALEAQDARWICGAAPAPGRYAAKTRYRQQDASCTMASAGQAGFRLHFSEEQWAVTPGQSAVLYDGNVCLGGGVIAG</sequence>
<name>MNMA_VEREI</name>
<protein>
    <recommendedName>
        <fullName evidence="1">tRNA-specific 2-thiouridylase MnmA</fullName>
        <ecNumber evidence="1">2.8.1.13</ecNumber>
    </recommendedName>
</protein>
<dbReference type="EC" id="2.8.1.13" evidence="1"/>
<dbReference type="EMBL" id="CP000542">
    <property type="protein sequence ID" value="ABM56088.1"/>
    <property type="molecule type" value="Genomic_DNA"/>
</dbReference>
<dbReference type="RefSeq" id="WP_011808105.1">
    <property type="nucleotide sequence ID" value="NC_008786.1"/>
</dbReference>
<dbReference type="SMR" id="A1WEN1"/>
<dbReference type="STRING" id="391735.Veis_0297"/>
<dbReference type="GeneID" id="76459038"/>
<dbReference type="KEGG" id="vei:Veis_0297"/>
<dbReference type="eggNOG" id="COG0482">
    <property type="taxonomic scope" value="Bacteria"/>
</dbReference>
<dbReference type="HOGENOM" id="CLU_035188_1_0_4"/>
<dbReference type="OrthoDB" id="9800696at2"/>
<dbReference type="Proteomes" id="UP000000374">
    <property type="component" value="Chromosome"/>
</dbReference>
<dbReference type="GO" id="GO:0005737">
    <property type="term" value="C:cytoplasm"/>
    <property type="evidence" value="ECO:0007669"/>
    <property type="project" value="UniProtKB-SubCell"/>
</dbReference>
<dbReference type="GO" id="GO:0005524">
    <property type="term" value="F:ATP binding"/>
    <property type="evidence" value="ECO:0007669"/>
    <property type="project" value="UniProtKB-KW"/>
</dbReference>
<dbReference type="GO" id="GO:0000049">
    <property type="term" value="F:tRNA binding"/>
    <property type="evidence" value="ECO:0007669"/>
    <property type="project" value="UniProtKB-KW"/>
</dbReference>
<dbReference type="GO" id="GO:0103016">
    <property type="term" value="F:tRNA-uridine 2-sulfurtransferase activity"/>
    <property type="evidence" value="ECO:0007669"/>
    <property type="project" value="UniProtKB-EC"/>
</dbReference>
<dbReference type="GO" id="GO:0002143">
    <property type="term" value="P:tRNA wobble position uridine thiolation"/>
    <property type="evidence" value="ECO:0007669"/>
    <property type="project" value="TreeGrafter"/>
</dbReference>
<dbReference type="CDD" id="cd01998">
    <property type="entry name" value="MnmA_TRMU-like"/>
    <property type="match status" value="1"/>
</dbReference>
<dbReference type="FunFam" id="2.30.30.280:FF:000001">
    <property type="entry name" value="tRNA-specific 2-thiouridylase MnmA"/>
    <property type="match status" value="1"/>
</dbReference>
<dbReference type="FunFam" id="2.40.30.10:FF:000023">
    <property type="entry name" value="tRNA-specific 2-thiouridylase MnmA"/>
    <property type="match status" value="1"/>
</dbReference>
<dbReference type="FunFam" id="3.40.50.620:FF:000004">
    <property type="entry name" value="tRNA-specific 2-thiouridylase MnmA"/>
    <property type="match status" value="1"/>
</dbReference>
<dbReference type="Gene3D" id="2.30.30.280">
    <property type="entry name" value="Adenine nucleotide alpha hydrolases-like domains"/>
    <property type="match status" value="1"/>
</dbReference>
<dbReference type="Gene3D" id="3.40.50.620">
    <property type="entry name" value="HUPs"/>
    <property type="match status" value="1"/>
</dbReference>
<dbReference type="Gene3D" id="2.40.30.10">
    <property type="entry name" value="Translation factors"/>
    <property type="match status" value="1"/>
</dbReference>
<dbReference type="HAMAP" id="MF_00144">
    <property type="entry name" value="tRNA_thiouridyl_MnmA"/>
    <property type="match status" value="1"/>
</dbReference>
<dbReference type="InterPro" id="IPR004506">
    <property type="entry name" value="MnmA-like"/>
</dbReference>
<dbReference type="InterPro" id="IPR046885">
    <property type="entry name" value="MnmA-like_C"/>
</dbReference>
<dbReference type="InterPro" id="IPR046884">
    <property type="entry name" value="MnmA-like_central"/>
</dbReference>
<dbReference type="InterPro" id="IPR023382">
    <property type="entry name" value="MnmA-like_central_sf"/>
</dbReference>
<dbReference type="InterPro" id="IPR014729">
    <property type="entry name" value="Rossmann-like_a/b/a_fold"/>
</dbReference>
<dbReference type="NCBIfam" id="NF001138">
    <property type="entry name" value="PRK00143.1"/>
    <property type="match status" value="1"/>
</dbReference>
<dbReference type="NCBIfam" id="TIGR00420">
    <property type="entry name" value="trmU"/>
    <property type="match status" value="1"/>
</dbReference>
<dbReference type="PANTHER" id="PTHR11933:SF5">
    <property type="entry name" value="MITOCHONDRIAL TRNA-SPECIFIC 2-THIOURIDYLASE 1"/>
    <property type="match status" value="1"/>
</dbReference>
<dbReference type="PANTHER" id="PTHR11933">
    <property type="entry name" value="TRNA 5-METHYLAMINOMETHYL-2-THIOURIDYLATE -METHYLTRANSFERASE"/>
    <property type="match status" value="1"/>
</dbReference>
<dbReference type="Pfam" id="PF03054">
    <property type="entry name" value="tRNA_Me_trans"/>
    <property type="match status" value="1"/>
</dbReference>
<dbReference type="Pfam" id="PF20258">
    <property type="entry name" value="tRNA_Me_trans_C"/>
    <property type="match status" value="1"/>
</dbReference>
<dbReference type="Pfam" id="PF20259">
    <property type="entry name" value="tRNA_Me_trans_M"/>
    <property type="match status" value="1"/>
</dbReference>
<dbReference type="SUPFAM" id="SSF52402">
    <property type="entry name" value="Adenine nucleotide alpha hydrolases-like"/>
    <property type="match status" value="1"/>
</dbReference>
<feature type="chain" id="PRO_1000057949" description="tRNA-specific 2-thiouridylase MnmA">
    <location>
        <begin position="1"/>
        <end position="370"/>
    </location>
</feature>
<feature type="region of interest" description="Interaction with target base in tRNA" evidence="1">
    <location>
        <begin position="98"/>
        <end position="100"/>
    </location>
</feature>
<feature type="region of interest" description="Interaction with tRNA" evidence="1">
    <location>
        <begin position="151"/>
        <end position="153"/>
    </location>
</feature>
<feature type="region of interest" description="Interaction with tRNA" evidence="1">
    <location>
        <begin position="319"/>
        <end position="320"/>
    </location>
</feature>
<feature type="active site" description="Nucleophile" evidence="1">
    <location>
        <position position="103"/>
    </location>
</feature>
<feature type="active site" description="Cysteine persulfide intermediate" evidence="1">
    <location>
        <position position="201"/>
    </location>
</feature>
<feature type="binding site" evidence="1">
    <location>
        <begin position="12"/>
        <end position="19"/>
    </location>
    <ligand>
        <name>ATP</name>
        <dbReference type="ChEBI" id="CHEBI:30616"/>
    </ligand>
</feature>
<feature type="binding site" evidence="1">
    <location>
        <position position="38"/>
    </location>
    <ligand>
        <name>ATP</name>
        <dbReference type="ChEBI" id="CHEBI:30616"/>
    </ligand>
</feature>
<feature type="binding site" evidence="1">
    <location>
        <position position="127"/>
    </location>
    <ligand>
        <name>ATP</name>
        <dbReference type="ChEBI" id="CHEBI:30616"/>
    </ligand>
</feature>
<feature type="site" description="Interaction with tRNA" evidence="1">
    <location>
        <position position="128"/>
    </location>
</feature>
<feature type="site" description="Interaction with tRNA" evidence="1">
    <location>
        <position position="352"/>
    </location>
</feature>
<feature type="disulfide bond" description="Alternate" evidence="1">
    <location>
        <begin position="103"/>
        <end position="201"/>
    </location>
</feature>
<evidence type="ECO:0000255" key="1">
    <source>
        <dbReference type="HAMAP-Rule" id="MF_00144"/>
    </source>
</evidence>
<reference key="1">
    <citation type="submission" date="2006-12" db="EMBL/GenBank/DDBJ databases">
        <title>Complete sequence of chromosome 1 of Verminephrobacter eiseniae EF01-2.</title>
        <authorList>
            <person name="Copeland A."/>
            <person name="Lucas S."/>
            <person name="Lapidus A."/>
            <person name="Barry K."/>
            <person name="Detter J.C."/>
            <person name="Glavina del Rio T."/>
            <person name="Dalin E."/>
            <person name="Tice H."/>
            <person name="Pitluck S."/>
            <person name="Chertkov O."/>
            <person name="Brettin T."/>
            <person name="Bruce D."/>
            <person name="Han C."/>
            <person name="Tapia R."/>
            <person name="Gilna P."/>
            <person name="Schmutz J."/>
            <person name="Larimer F."/>
            <person name="Land M."/>
            <person name="Hauser L."/>
            <person name="Kyrpides N."/>
            <person name="Kim E."/>
            <person name="Stahl D."/>
            <person name="Richardson P."/>
        </authorList>
    </citation>
    <scope>NUCLEOTIDE SEQUENCE [LARGE SCALE GENOMIC DNA]</scope>
    <source>
        <strain>EF01-2</strain>
    </source>
</reference>